<dbReference type="EC" id="6.1.1.11" evidence="1"/>
<dbReference type="EMBL" id="AM233362">
    <property type="protein sequence ID" value="CAJ79930.1"/>
    <property type="molecule type" value="Genomic_DNA"/>
</dbReference>
<dbReference type="RefSeq" id="WP_003016800.1">
    <property type="nucleotide sequence ID" value="NZ_CP009694.1"/>
</dbReference>
<dbReference type="SMR" id="Q2A2B0"/>
<dbReference type="KEGG" id="ftl:FTL_1491"/>
<dbReference type="UniPathway" id="UPA00906">
    <property type="reaction ID" value="UER00895"/>
</dbReference>
<dbReference type="Proteomes" id="UP000001944">
    <property type="component" value="Chromosome"/>
</dbReference>
<dbReference type="GO" id="GO:0005737">
    <property type="term" value="C:cytoplasm"/>
    <property type="evidence" value="ECO:0007669"/>
    <property type="project" value="UniProtKB-SubCell"/>
</dbReference>
<dbReference type="GO" id="GO:0005524">
    <property type="term" value="F:ATP binding"/>
    <property type="evidence" value="ECO:0007669"/>
    <property type="project" value="UniProtKB-UniRule"/>
</dbReference>
<dbReference type="GO" id="GO:0004828">
    <property type="term" value="F:serine-tRNA ligase activity"/>
    <property type="evidence" value="ECO:0007669"/>
    <property type="project" value="UniProtKB-UniRule"/>
</dbReference>
<dbReference type="GO" id="GO:0016260">
    <property type="term" value="P:selenocysteine biosynthetic process"/>
    <property type="evidence" value="ECO:0007669"/>
    <property type="project" value="UniProtKB-UniRule"/>
</dbReference>
<dbReference type="GO" id="GO:0006434">
    <property type="term" value="P:seryl-tRNA aminoacylation"/>
    <property type="evidence" value="ECO:0007669"/>
    <property type="project" value="UniProtKB-UniRule"/>
</dbReference>
<dbReference type="CDD" id="cd00770">
    <property type="entry name" value="SerRS_core"/>
    <property type="match status" value="1"/>
</dbReference>
<dbReference type="Gene3D" id="3.30.930.10">
    <property type="entry name" value="Bira Bifunctional Protein, Domain 2"/>
    <property type="match status" value="1"/>
</dbReference>
<dbReference type="Gene3D" id="1.10.287.40">
    <property type="entry name" value="Serine-tRNA synthetase, tRNA binding domain"/>
    <property type="match status" value="1"/>
</dbReference>
<dbReference type="HAMAP" id="MF_00176">
    <property type="entry name" value="Ser_tRNA_synth_type1"/>
    <property type="match status" value="1"/>
</dbReference>
<dbReference type="InterPro" id="IPR002314">
    <property type="entry name" value="aa-tRNA-synt_IIb"/>
</dbReference>
<dbReference type="InterPro" id="IPR006195">
    <property type="entry name" value="aa-tRNA-synth_II"/>
</dbReference>
<dbReference type="InterPro" id="IPR045864">
    <property type="entry name" value="aa-tRNA-synth_II/BPL/LPL"/>
</dbReference>
<dbReference type="InterPro" id="IPR002317">
    <property type="entry name" value="Ser-tRNA-ligase_type_1"/>
</dbReference>
<dbReference type="InterPro" id="IPR015866">
    <property type="entry name" value="Ser-tRNA-synth_1_N"/>
</dbReference>
<dbReference type="InterPro" id="IPR042103">
    <property type="entry name" value="SerRS_1_N_sf"/>
</dbReference>
<dbReference type="InterPro" id="IPR033729">
    <property type="entry name" value="SerRS_core"/>
</dbReference>
<dbReference type="InterPro" id="IPR010978">
    <property type="entry name" value="tRNA-bd_arm"/>
</dbReference>
<dbReference type="NCBIfam" id="TIGR00414">
    <property type="entry name" value="serS"/>
    <property type="match status" value="1"/>
</dbReference>
<dbReference type="PANTHER" id="PTHR43697:SF1">
    <property type="entry name" value="SERINE--TRNA LIGASE"/>
    <property type="match status" value="1"/>
</dbReference>
<dbReference type="PANTHER" id="PTHR43697">
    <property type="entry name" value="SERYL-TRNA SYNTHETASE"/>
    <property type="match status" value="1"/>
</dbReference>
<dbReference type="Pfam" id="PF02403">
    <property type="entry name" value="Seryl_tRNA_N"/>
    <property type="match status" value="1"/>
</dbReference>
<dbReference type="Pfam" id="PF00587">
    <property type="entry name" value="tRNA-synt_2b"/>
    <property type="match status" value="1"/>
</dbReference>
<dbReference type="PIRSF" id="PIRSF001529">
    <property type="entry name" value="Ser-tRNA-synth_IIa"/>
    <property type="match status" value="1"/>
</dbReference>
<dbReference type="PRINTS" id="PR00981">
    <property type="entry name" value="TRNASYNTHSER"/>
</dbReference>
<dbReference type="SUPFAM" id="SSF55681">
    <property type="entry name" value="Class II aaRS and biotin synthetases"/>
    <property type="match status" value="1"/>
</dbReference>
<dbReference type="SUPFAM" id="SSF46589">
    <property type="entry name" value="tRNA-binding arm"/>
    <property type="match status" value="1"/>
</dbReference>
<dbReference type="PROSITE" id="PS50862">
    <property type="entry name" value="AA_TRNA_LIGASE_II"/>
    <property type="match status" value="1"/>
</dbReference>
<comment type="function">
    <text evidence="1">Catalyzes the attachment of serine to tRNA(Ser). Is also able to aminoacylate tRNA(Sec) with serine, to form the misacylated tRNA L-seryl-tRNA(Sec), which will be further converted into selenocysteinyl-tRNA(Sec).</text>
</comment>
<comment type="catalytic activity">
    <reaction evidence="1">
        <text>tRNA(Ser) + L-serine + ATP = L-seryl-tRNA(Ser) + AMP + diphosphate + H(+)</text>
        <dbReference type="Rhea" id="RHEA:12292"/>
        <dbReference type="Rhea" id="RHEA-COMP:9669"/>
        <dbReference type="Rhea" id="RHEA-COMP:9703"/>
        <dbReference type="ChEBI" id="CHEBI:15378"/>
        <dbReference type="ChEBI" id="CHEBI:30616"/>
        <dbReference type="ChEBI" id="CHEBI:33019"/>
        <dbReference type="ChEBI" id="CHEBI:33384"/>
        <dbReference type="ChEBI" id="CHEBI:78442"/>
        <dbReference type="ChEBI" id="CHEBI:78533"/>
        <dbReference type="ChEBI" id="CHEBI:456215"/>
        <dbReference type="EC" id="6.1.1.11"/>
    </reaction>
</comment>
<comment type="catalytic activity">
    <reaction evidence="1">
        <text>tRNA(Sec) + L-serine + ATP = L-seryl-tRNA(Sec) + AMP + diphosphate + H(+)</text>
        <dbReference type="Rhea" id="RHEA:42580"/>
        <dbReference type="Rhea" id="RHEA-COMP:9742"/>
        <dbReference type="Rhea" id="RHEA-COMP:10128"/>
        <dbReference type="ChEBI" id="CHEBI:15378"/>
        <dbReference type="ChEBI" id="CHEBI:30616"/>
        <dbReference type="ChEBI" id="CHEBI:33019"/>
        <dbReference type="ChEBI" id="CHEBI:33384"/>
        <dbReference type="ChEBI" id="CHEBI:78442"/>
        <dbReference type="ChEBI" id="CHEBI:78533"/>
        <dbReference type="ChEBI" id="CHEBI:456215"/>
        <dbReference type="EC" id="6.1.1.11"/>
    </reaction>
</comment>
<comment type="pathway">
    <text evidence="1">Aminoacyl-tRNA biosynthesis; selenocysteinyl-tRNA(Sec) biosynthesis; L-seryl-tRNA(Sec) from L-serine and tRNA(Sec): step 1/1.</text>
</comment>
<comment type="subunit">
    <text evidence="1">Homodimer. The tRNA molecule binds across the dimer.</text>
</comment>
<comment type="subcellular location">
    <subcellularLocation>
        <location evidence="1">Cytoplasm</location>
    </subcellularLocation>
</comment>
<comment type="domain">
    <text evidence="1">Consists of two distinct domains, a catalytic core and a N-terminal extension that is involved in tRNA binding.</text>
</comment>
<comment type="similarity">
    <text evidence="1">Belongs to the class-II aminoacyl-tRNA synthetase family. Type-1 seryl-tRNA synthetase subfamily.</text>
</comment>
<reference key="1">
    <citation type="submission" date="2006-03" db="EMBL/GenBank/DDBJ databases">
        <title>Complete genome sequence of Francisella tularensis LVS (Live Vaccine Strain).</title>
        <authorList>
            <person name="Chain P."/>
            <person name="Larimer F."/>
            <person name="Land M."/>
            <person name="Stilwagen S."/>
            <person name="Larsson P."/>
            <person name="Bearden S."/>
            <person name="Chu M."/>
            <person name="Oyston P."/>
            <person name="Forsman M."/>
            <person name="Andersson S."/>
            <person name="Lindler L."/>
            <person name="Titball R."/>
            <person name="Garcia E."/>
        </authorList>
    </citation>
    <scope>NUCLEOTIDE SEQUENCE [LARGE SCALE GENOMIC DNA]</scope>
    <source>
        <strain>LVS</strain>
    </source>
</reference>
<feature type="chain" id="PRO_1000019683" description="Serine--tRNA ligase">
    <location>
        <begin position="1"/>
        <end position="426"/>
    </location>
</feature>
<feature type="region of interest" description="Disordered" evidence="2">
    <location>
        <begin position="36"/>
        <end position="66"/>
    </location>
</feature>
<feature type="compositionally biased region" description="Polar residues" evidence="2">
    <location>
        <begin position="46"/>
        <end position="55"/>
    </location>
</feature>
<feature type="binding site" evidence="1">
    <location>
        <begin position="233"/>
        <end position="235"/>
    </location>
    <ligand>
        <name>L-serine</name>
        <dbReference type="ChEBI" id="CHEBI:33384"/>
    </ligand>
</feature>
<feature type="binding site" evidence="1">
    <location>
        <begin position="264"/>
        <end position="266"/>
    </location>
    <ligand>
        <name>ATP</name>
        <dbReference type="ChEBI" id="CHEBI:30616"/>
    </ligand>
</feature>
<feature type="binding site" evidence="1">
    <location>
        <position position="287"/>
    </location>
    <ligand>
        <name>L-serine</name>
        <dbReference type="ChEBI" id="CHEBI:33384"/>
    </ligand>
</feature>
<feature type="binding site" evidence="1">
    <location>
        <begin position="351"/>
        <end position="354"/>
    </location>
    <ligand>
        <name>ATP</name>
        <dbReference type="ChEBI" id="CHEBI:30616"/>
    </ligand>
</feature>
<feature type="binding site" evidence="1">
    <location>
        <position position="387"/>
    </location>
    <ligand>
        <name>L-serine</name>
        <dbReference type="ChEBI" id="CHEBI:33384"/>
    </ligand>
</feature>
<evidence type="ECO:0000255" key="1">
    <source>
        <dbReference type="HAMAP-Rule" id="MF_00176"/>
    </source>
</evidence>
<evidence type="ECO:0000256" key="2">
    <source>
        <dbReference type="SAM" id="MobiDB-lite"/>
    </source>
</evidence>
<gene>
    <name evidence="1" type="primary">serS</name>
    <name type="ordered locus">FTL_1491</name>
</gene>
<proteinExistence type="inferred from homology"/>
<keyword id="KW-0030">Aminoacyl-tRNA synthetase</keyword>
<keyword id="KW-0067">ATP-binding</keyword>
<keyword id="KW-0963">Cytoplasm</keyword>
<keyword id="KW-0436">Ligase</keyword>
<keyword id="KW-0547">Nucleotide-binding</keyword>
<keyword id="KW-0648">Protein biosynthesis</keyword>
<keyword id="KW-1185">Reference proteome</keyword>
<organism>
    <name type="scientific">Francisella tularensis subsp. holarctica (strain LVS)</name>
    <dbReference type="NCBI Taxonomy" id="376619"/>
    <lineage>
        <taxon>Bacteria</taxon>
        <taxon>Pseudomonadati</taxon>
        <taxon>Pseudomonadota</taxon>
        <taxon>Gammaproteobacteria</taxon>
        <taxon>Thiotrichales</taxon>
        <taxon>Francisellaceae</taxon>
        <taxon>Francisella</taxon>
    </lineage>
</organism>
<name>SYS_FRATH</name>
<sequence length="426" mass="48570">MLDAKYVKDNLQQVAEKLATRGYQFDIAEFEAQEQKRKHLQERTQDLQSQRNTISKEIGQKKAKGEDTSDIFAKVNQINEELKIIEKELKDLQDTINQTLLSMPNLPADDVPVGKDENDNVEIRRWGTPREFHPEAPAKDHSDIGEILKMIDFKAAAKVTGSRFMVLKNKIAKLHRALSQFMLDLHTEKHGYEELYVPYLVNNDSLYGTGQLPKFAANLFKLEGDFEYSLIPTAEVPITNLVRDEILDTETLPRYYTAHTPCFRSEAGSYGRDTKGMIRQHQFEKVELVHITTADKGEESLELLTSHAEKVLQKLNLPYRVMKLCTGDMGFSAKKTYDLEVWLPSQNTYREISSCSWCGDFQARRMKARHKNPSMKKPELVHTLNGSGLAVGRTLLAIIENYQQEDGSIMVPDALIKYMGGISVIK</sequence>
<accession>Q2A2B0</accession>
<protein>
    <recommendedName>
        <fullName evidence="1">Serine--tRNA ligase</fullName>
        <ecNumber evidence="1">6.1.1.11</ecNumber>
    </recommendedName>
    <alternativeName>
        <fullName evidence="1">Seryl-tRNA synthetase</fullName>
        <shortName evidence="1">SerRS</shortName>
    </alternativeName>
    <alternativeName>
        <fullName evidence="1">Seryl-tRNA(Ser/Sec) synthetase</fullName>
    </alternativeName>
</protein>